<protein>
    <recommendedName>
        <fullName evidence="2">Pathogenesis-related protein 10</fullName>
    </recommendedName>
</protein>
<name>PR10_SOYBN</name>
<feature type="chain" id="PRO_0000445725" description="Pathogenesis-related protein 10">
    <location>
        <begin position="1"/>
        <end position="157"/>
    </location>
</feature>
<sequence length="157" mass="17140">MGVVTQIYDTPAAVPPTRLFKAMTLDFHNLFPKLVDSIHSIVFTQGNGGPGTIKKITTIEGDKTKYVLHRVDAIDEANFVYNFSITEGTALADTLEKVSFESQLVEAPNGGSIRKVSVQFFTKGDATLSEEELTANKAKIQGLVKLVEGYLLANPDY</sequence>
<accession>E6YBW4</accession>
<dbReference type="EMBL" id="FJ960440">
    <property type="protein sequence ID" value="ADC31789.1"/>
    <property type="molecule type" value="mRNA"/>
</dbReference>
<dbReference type="EMBL" id="CM000842">
    <property type="protein sequence ID" value="KRH37040.1"/>
    <property type="molecule type" value="Genomic_DNA"/>
</dbReference>
<dbReference type="RefSeq" id="NP_001238280.2">
    <property type="nucleotide sequence ID" value="NM_001251351.2"/>
</dbReference>
<dbReference type="SMR" id="E6YBW4"/>
<dbReference type="STRING" id="3847.E6YBW4"/>
<dbReference type="PaxDb" id="3847-GLYMA09G04520.1"/>
<dbReference type="EnsemblPlants" id="KRH37040">
    <property type="protein sequence ID" value="KRH37040"/>
    <property type="gene ID" value="GLYMA_09G040500"/>
</dbReference>
<dbReference type="GeneID" id="100527073"/>
<dbReference type="Gramene" id="KRH37040">
    <property type="protein sequence ID" value="KRH37040"/>
    <property type="gene ID" value="GLYMA_09G040500"/>
</dbReference>
<dbReference type="KEGG" id="gmx:100527073"/>
<dbReference type="eggNOG" id="ENOG502RXTQ">
    <property type="taxonomic scope" value="Eukaryota"/>
</dbReference>
<dbReference type="HOGENOM" id="CLU_081988_2_0_1"/>
<dbReference type="InParanoid" id="E6YBW4"/>
<dbReference type="OMA" id="HFGESSH"/>
<dbReference type="OrthoDB" id="1880172at2759"/>
<dbReference type="Proteomes" id="UP000008827">
    <property type="component" value="Chromosome 9"/>
</dbReference>
<dbReference type="ExpressionAtlas" id="E6YBW4">
    <property type="expression patterns" value="baseline and differential"/>
</dbReference>
<dbReference type="GO" id="GO:0005737">
    <property type="term" value="C:cytoplasm"/>
    <property type="evidence" value="ECO:0000318"/>
    <property type="project" value="GO_Central"/>
</dbReference>
<dbReference type="GO" id="GO:0005634">
    <property type="term" value="C:nucleus"/>
    <property type="evidence" value="ECO:0000318"/>
    <property type="project" value="GO_Central"/>
</dbReference>
<dbReference type="GO" id="GO:0010427">
    <property type="term" value="F:abscisic acid binding"/>
    <property type="evidence" value="ECO:0000318"/>
    <property type="project" value="GO_Central"/>
</dbReference>
<dbReference type="GO" id="GO:0004864">
    <property type="term" value="F:protein phosphatase inhibitor activity"/>
    <property type="evidence" value="ECO:0000318"/>
    <property type="project" value="GO_Central"/>
</dbReference>
<dbReference type="GO" id="GO:0004540">
    <property type="term" value="F:RNA nuclease activity"/>
    <property type="evidence" value="ECO:0000314"/>
    <property type="project" value="UniProtKB"/>
</dbReference>
<dbReference type="GO" id="GO:0038023">
    <property type="term" value="F:signaling receptor activity"/>
    <property type="evidence" value="ECO:0000318"/>
    <property type="project" value="GO_Central"/>
</dbReference>
<dbReference type="GO" id="GO:0009738">
    <property type="term" value="P:abscisic acid-activated signaling pathway"/>
    <property type="evidence" value="ECO:0000318"/>
    <property type="project" value="GO_Central"/>
</dbReference>
<dbReference type="GO" id="GO:0050832">
    <property type="term" value="P:defense response to fungus"/>
    <property type="evidence" value="ECO:0000314"/>
    <property type="project" value="UniProtKB"/>
</dbReference>
<dbReference type="CDD" id="cd07816">
    <property type="entry name" value="Bet_v1-like"/>
    <property type="match status" value="1"/>
</dbReference>
<dbReference type="FunFam" id="3.30.530.20:FF:000007">
    <property type="entry name" value="Major pollen allergen Bet v 1-A"/>
    <property type="match status" value="1"/>
</dbReference>
<dbReference type="Gene3D" id="3.30.530.20">
    <property type="match status" value="1"/>
</dbReference>
<dbReference type="InterPro" id="IPR000916">
    <property type="entry name" value="Bet_v_I/MLP"/>
</dbReference>
<dbReference type="InterPro" id="IPR024949">
    <property type="entry name" value="Bet_v_I_allergen"/>
</dbReference>
<dbReference type="InterPro" id="IPR050279">
    <property type="entry name" value="Plant_def-hormone_signal"/>
</dbReference>
<dbReference type="InterPro" id="IPR023393">
    <property type="entry name" value="START-like_dom_sf"/>
</dbReference>
<dbReference type="PANTHER" id="PTHR31213">
    <property type="entry name" value="OS08G0374000 PROTEIN-RELATED"/>
    <property type="match status" value="1"/>
</dbReference>
<dbReference type="PANTHER" id="PTHR31213:SF80">
    <property type="entry name" value="PATHOGENESIS-RELATED PROTEIN 10"/>
    <property type="match status" value="1"/>
</dbReference>
<dbReference type="Pfam" id="PF00407">
    <property type="entry name" value="Bet_v_1"/>
    <property type="match status" value="1"/>
</dbReference>
<dbReference type="PRINTS" id="PR00634">
    <property type="entry name" value="BETALLERGEN"/>
</dbReference>
<dbReference type="SUPFAM" id="SSF55961">
    <property type="entry name" value="Bet v1-like"/>
    <property type="match status" value="1"/>
</dbReference>
<dbReference type="PROSITE" id="PS00451">
    <property type="entry name" value="PATHOGENESIS_BETVI"/>
    <property type="match status" value="1"/>
</dbReference>
<evidence type="ECO:0000269" key="1">
    <source>
    </source>
</evidence>
<evidence type="ECO:0000303" key="2">
    <source>
    </source>
</evidence>
<evidence type="ECO:0000305" key="3"/>
<evidence type="ECO:0000312" key="4">
    <source>
        <dbReference type="EMBL" id="KRH37040.1"/>
    </source>
</evidence>
<gene>
    <name evidence="2" type="primary">PR10</name>
    <name evidence="4" type="ORF">GLYMA_09G040500</name>
</gene>
<proteinExistence type="evidence at transcript level"/>
<keyword id="KW-0568">Pathogenesis-related protein</keyword>
<keyword id="KW-0611">Plant defense</keyword>
<keyword id="KW-1185">Reference proteome</keyword>
<comment type="function">
    <text evidence="1">Involved in resistance against the pathogen Phytophtora sojae (PubMed:24737571). Inhibits hyphal growth of Phytophtora sojae (PubMed:24737571). Possesses ribonuclease activity in vitro (PubMed:24737571).</text>
</comment>
<comment type="tissue specificity">
    <text evidence="1">Highly expressed in leaves (PubMed:24737571). Expressed in roots (PubMed:24737571). Expressed at low levels in stems (PubMed:24737571).</text>
</comment>
<comment type="similarity">
    <text evidence="3">Belongs to the BetVI family.</text>
</comment>
<reference key="1">
    <citation type="journal article" date="2014" name="Mol. Biol. Rep.">
        <title>Isolation and characterization of a pathogenesis-related protein 10 gene (GmPR10) with induced expression in soybean (Glycine max) during infection with Phytophthora sojae.</title>
        <authorList>
            <person name="Xu P."/>
            <person name="Jiang L."/>
            <person name="Wu J."/>
            <person name="Li W."/>
            <person name="Fan S."/>
            <person name="Zhang S."/>
        </authorList>
    </citation>
    <scope>NUCLEOTIDE SEQUENCE [MRNA]</scope>
    <scope>FUNCTION</scope>
    <scope>TISSUE SPECIFICITY</scope>
</reference>
<reference key="2">
    <citation type="journal article" date="2010" name="Nature">
        <title>Genome sequence of the palaeopolyploid soybean.</title>
        <authorList>
            <person name="Schmutz J."/>
            <person name="Cannon S.B."/>
            <person name="Schlueter J."/>
            <person name="Ma J."/>
            <person name="Mitros T."/>
            <person name="Nelson W."/>
            <person name="Hyten D.L."/>
            <person name="Song Q."/>
            <person name="Thelen J.J."/>
            <person name="Cheng J."/>
            <person name="Xu D."/>
            <person name="Hellsten U."/>
            <person name="May G.D."/>
            <person name="Yu Y."/>
            <person name="Sakurai T."/>
            <person name="Umezawa T."/>
            <person name="Bhattacharyya M.K."/>
            <person name="Sandhu D."/>
            <person name="Valliyodan B."/>
            <person name="Lindquist E."/>
            <person name="Peto M."/>
            <person name="Grant D."/>
            <person name="Shu S."/>
            <person name="Goodstein D."/>
            <person name="Barry K."/>
            <person name="Futrell-Griggs M."/>
            <person name="Abernathy B."/>
            <person name="Du J."/>
            <person name="Tian Z."/>
            <person name="Zhu L."/>
            <person name="Gill N."/>
            <person name="Joshi T."/>
            <person name="Libault M."/>
            <person name="Sethuraman A."/>
            <person name="Zhang X.-C."/>
            <person name="Shinozaki K."/>
            <person name="Nguyen H.T."/>
            <person name="Wing R.A."/>
            <person name="Cregan P."/>
            <person name="Specht J."/>
            <person name="Grimwood J."/>
            <person name="Rokhsar D."/>
            <person name="Stacey G."/>
            <person name="Shoemaker R.C."/>
            <person name="Jackson S.A."/>
        </authorList>
    </citation>
    <scope>NUCLEOTIDE SEQUENCE [LARGE SCALE GENOMIC DNA]</scope>
    <source>
        <strain>cv. Williams 82</strain>
    </source>
</reference>
<organism>
    <name type="scientific">Glycine max</name>
    <name type="common">Soybean</name>
    <name type="synonym">Glycine hispida</name>
    <dbReference type="NCBI Taxonomy" id="3847"/>
    <lineage>
        <taxon>Eukaryota</taxon>
        <taxon>Viridiplantae</taxon>
        <taxon>Streptophyta</taxon>
        <taxon>Embryophyta</taxon>
        <taxon>Tracheophyta</taxon>
        <taxon>Spermatophyta</taxon>
        <taxon>Magnoliopsida</taxon>
        <taxon>eudicotyledons</taxon>
        <taxon>Gunneridae</taxon>
        <taxon>Pentapetalae</taxon>
        <taxon>rosids</taxon>
        <taxon>fabids</taxon>
        <taxon>Fabales</taxon>
        <taxon>Fabaceae</taxon>
        <taxon>Papilionoideae</taxon>
        <taxon>50 kb inversion clade</taxon>
        <taxon>NPAAA clade</taxon>
        <taxon>indigoferoid/millettioid clade</taxon>
        <taxon>Phaseoleae</taxon>
        <taxon>Glycine</taxon>
        <taxon>Glycine subgen. Soja</taxon>
    </lineage>
</organism>